<comment type="function">
    <text evidence="7 10">Involved in pre-mRNA splicing and its phosphorylated form (by SRPK2) is required for spliceosomal B complex formation (PubMed:18425142). Independently of its spliceosome formation function, required for the suppression of incorrect R-loops formed during transcription; R-loops are composed of a DNA:RNA hybrid and the associated non-template single-stranded DNA (PubMed:28076779).</text>
</comment>
<comment type="catalytic activity">
    <reaction evidence="13">
        <text>ATP + H2O = ADP + phosphate + H(+)</text>
        <dbReference type="Rhea" id="RHEA:13065"/>
        <dbReference type="ChEBI" id="CHEBI:15377"/>
        <dbReference type="ChEBI" id="CHEBI:15378"/>
        <dbReference type="ChEBI" id="CHEBI:30616"/>
        <dbReference type="ChEBI" id="CHEBI:43474"/>
        <dbReference type="ChEBI" id="CHEBI:456216"/>
        <dbReference type="EC" id="3.6.4.13"/>
    </reaction>
</comment>
<comment type="subunit">
    <text evidence="5 6 8 9 11">The phosphorylated form (by SRPK2) is a component of the U4/U6-U5 tri-snRNP complex composed of the U4, U6 and U5 snRNAs and at least PRPF3, PRPF4, PRPF6, PRPF8, PRPF31, SNRNP200, TXNL4A, WDR57, SNRNP40, DDX23, CD2BP2, PPIH, SNU13, EFTUD2, SART1 and USP39 (PubMed:16723661, PubMed:9409622). Identified in the spliceosome C complex (PubMed:11991638). Interacts with ERBB4 (PubMed:20858735). Interacts with ERCC6 (PubMed:26030138).</text>
</comment>
<comment type="interaction">
    <interactant intactId="EBI-540096">
        <id>Q9BUQ8</id>
    </interactant>
    <interactant intactId="EBI-2462271">
        <id>Q15428</id>
        <label>SF3A2</label>
    </interactant>
    <organismsDiffer>false</organismsDiffer>
    <experiments>2</experiments>
</comment>
<comment type="interaction">
    <interactant intactId="EBI-540096">
        <id>Q9BUQ8</id>
    </interactant>
    <interactant intactId="EBI-538492">
        <id>Q96DI7</id>
        <label>SNRNP40</label>
    </interactant>
    <organismsDiffer>false</organismsDiffer>
    <experiments>5</experiments>
</comment>
<comment type="interaction">
    <interactant intactId="EBI-540096">
        <id>Q9BUQ8</id>
    </interactant>
    <interactant intactId="EBI-710997">
        <id>P54274</id>
        <label>TERF1</label>
    </interactant>
    <organismsDiffer>false</organismsDiffer>
    <experiments>2</experiments>
</comment>
<comment type="subcellular location">
    <subcellularLocation>
        <location evidence="8 10 11">Nucleus</location>
    </subcellularLocation>
    <subcellularLocation>
        <location evidence="10">Chromosome</location>
    </subcellularLocation>
    <text evidence="10">During transcription, accumulates at chromatin loci where unscheduled R-loops form and colocalizes with paused 'Ser-5'-phosphorylated POLR2A/RNA polymerase II and kinase SRPK2.</text>
</comment>
<comment type="alternative products">
    <event type="alternative splicing"/>
    <isoform>
        <id>Q9BUQ8-1</id>
        <name>1</name>
        <sequence type="displayed"/>
    </isoform>
    <isoform>
        <id>Q9BUQ8-2</id>
        <name>2</name>
        <sequence type="described" ref="VSP_056575 VSP_056576"/>
    </isoform>
</comment>
<comment type="PTM">
    <text evidence="7 10 11">In vitro phosphorylated by CLK1 and U1 snRNP-associated protein kinase (PubMed:9409622). Phosphorylated by SRPK2 and this phosphorylation is required for its association with the tri-snRNP (U4/U6-U5 tri-small nuclear ribonucleoproteins) and subsequent spliceosomal B complex formation (PubMed:18425142). May be phosphorylated by SRPK2 on Ser residues in the SR domain; the phosphorylation is required for the removal of inappropriate R-loops during transcription (PubMed:28076779).</text>
</comment>
<comment type="similarity">
    <text evidence="13">Belongs to the DEAD box helicase family. DDX23/PRP28 subfamily.</text>
</comment>
<gene>
    <name evidence="14" type="primary">DDX23</name>
</gene>
<feature type="chain" id="PRO_0000055128" description="Probable ATP-dependent RNA helicase DDX23">
    <location>
        <begin position="1"/>
        <end position="820"/>
    </location>
</feature>
<feature type="domain" description="Helicase ATP-binding" evidence="1">
    <location>
        <begin position="422"/>
        <end position="627"/>
    </location>
</feature>
<feature type="domain" description="Helicase C-terminal" evidence="2">
    <location>
        <begin position="651"/>
        <end position="799"/>
    </location>
</feature>
<feature type="region of interest" description="Disordered" evidence="4">
    <location>
        <begin position="1"/>
        <end position="244"/>
    </location>
</feature>
<feature type="short sequence motif" description="Q motif" evidence="3">
    <location>
        <begin position="391"/>
        <end position="419"/>
    </location>
</feature>
<feature type="short sequence motif" description="DEAD box" evidence="1">
    <location>
        <begin position="549"/>
        <end position="552"/>
    </location>
</feature>
<feature type="compositionally biased region" description="Basic and acidic residues" evidence="4">
    <location>
        <begin position="1"/>
        <end position="42"/>
    </location>
</feature>
<feature type="compositionally biased region" description="Basic residues" evidence="4">
    <location>
        <begin position="43"/>
        <end position="65"/>
    </location>
</feature>
<feature type="compositionally biased region" description="Basic and acidic residues" evidence="4">
    <location>
        <begin position="66"/>
        <end position="105"/>
    </location>
</feature>
<feature type="compositionally biased region" description="Basic and acidic residues" evidence="4">
    <location>
        <begin position="112"/>
        <end position="137"/>
    </location>
</feature>
<feature type="compositionally biased region" description="Basic and acidic residues" evidence="4">
    <location>
        <begin position="147"/>
        <end position="226"/>
    </location>
</feature>
<feature type="compositionally biased region" description="Basic and acidic residues" evidence="4">
    <location>
        <begin position="233"/>
        <end position="244"/>
    </location>
</feature>
<feature type="binding site" evidence="1">
    <location>
        <begin position="435"/>
        <end position="442"/>
    </location>
    <ligand>
        <name>ATP</name>
        <dbReference type="ChEBI" id="CHEBI:30616"/>
    </ligand>
</feature>
<feature type="modified residue" description="Phosphoserine" evidence="15 16">
    <location>
        <position position="14"/>
    </location>
</feature>
<feature type="modified residue" description="Phosphoserine" evidence="15">
    <location>
        <position position="16"/>
    </location>
</feature>
<feature type="modified residue" description="Phosphoserine" evidence="16">
    <location>
        <position position="107"/>
    </location>
</feature>
<feature type="modified residue" description="Phosphoserine" evidence="16">
    <location>
        <position position="109"/>
    </location>
</feature>
<feature type="cross-link" description="Glycyl lysine isopeptide (Lys-Gly) (interchain with G-Cter in SUMO2)" evidence="17">
    <location>
        <position position="686"/>
    </location>
</feature>
<feature type="cross-link" description="Glycyl lysine isopeptide (Lys-Gly) (interchain with G-Cter in SUMO2)" evidence="17">
    <location>
        <position position="811"/>
    </location>
</feature>
<feature type="splice variant" id="VSP_056575" description="In isoform 2." evidence="12">
    <original>SL</original>
    <variation>RH</variation>
    <location>
        <begin position="107"/>
        <end position="108"/>
    </location>
</feature>
<feature type="splice variant" id="VSP_056576" description="In isoform 2." evidence="12">
    <location>
        <begin position="109"/>
        <end position="820"/>
    </location>
</feature>
<feature type="sequence conflict" description="In Ref. 1; AAB87902." evidence="13" ref="1">
    <original>P</original>
    <variation>L</variation>
    <location>
        <position position="137"/>
    </location>
</feature>
<feature type="sequence conflict" description="In Ref. 1; AAB87902." evidence="13" ref="1">
    <original>D</original>
    <variation>E</variation>
    <location>
        <position position="281"/>
    </location>
</feature>
<feature type="sequence conflict" description="In Ref. 1; AAB87902." evidence="13" ref="1">
    <original>L</original>
    <variation>F</variation>
    <location>
        <position position="309"/>
    </location>
</feature>
<feature type="helix" evidence="21">
    <location>
        <begin position="166"/>
        <end position="200"/>
    </location>
</feature>
<feature type="helix" evidence="19">
    <location>
        <begin position="244"/>
        <end position="254"/>
    </location>
</feature>
<feature type="helix" evidence="19">
    <location>
        <begin position="278"/>
        <end position="280"/>
    </location>
</feature>
<feature type="helix" evidence="19">
    <location>
        <begin position="288"/>
        <end position="290"/>
    </location>
</feature>
<feature type="helix" evidence="19">
    <location>
        <begin position="298"/>
        <end position="300"/>
    </location>
</feature>
<feature type="strand" evidence="19">
    <location>
        <begin position="305"/>
        <end position="307"/>
    </location>
</feature>
<feature type="helix" evidence="20">
    <location>
        <begin position="309"/>
        <end position="314"/>
    </location>
</feature>
<feature type="helix" evidence="20">
    <location>
        <begin position="319"/>
        <end position="327"/>
    </location>
</feature>
<feature type="helix" evidence="20">
    <location>
        <begin position="330"/>
        <end position="353"/>
    </location>
</feature>
<feature type="helix" evidence="18">
    <location>
        <begin position="357"/>
        <end position="359"/>
    </location>
</feature>
<feature type="helix" evidence="18">
    <location>
        <begin position="362"/>
        <end position="364"/>
    </location>
</feature>
<feature type="helix" evidence="18">
    <location>
        <begin position="367"/>
        <end position="377"/>
    </location>
</feature>
<feature type="strand" evidence="18">
    <location>
        <begin position="379"/>
        <end position="385"/>
    </location>
</feature>
<feature type="turn" evidence="18">
    <location>
        <begin position="393"/>
        <end position="395"/>
    </location>
</feature>
<feature type="helix" evidence="18">
    <location>
        <begin position="400"/>
        <end position="409"/>
    </location>
</feature>
<feature type="helix" evidence="18">
    <location>
        <begin position="416"/>
        <end position="425"/>
    </location>
</feature>
<feature type="turn" evidence="18">
    <location>
        <begin position="426"/>
        <end position="428"/>
    </location>
</feature>
<feature type="strand" evidence="18">
    <location>
        <begin position="431"/>
        <end position="434"/>
    </location>
</feature>
<feature type="helix" evidence="18">
    <location>
        <begin position="441"/>
        <end position="455"/>
    </location>
</feature>
<feature type="helix" evidence="18">
    <location>
        <begin position="458"/>
        <end position="461"/>
    </location>
</feature>
<feature type="strand" evidence="18">
    <location>
        <begin position="470"/>
        <end position="474"/>
    </location>
</feature>
<feature type="helix" evidence="18">
    <location>
        <begin position="478"/>
        <end position="492"/>
    </location>
</feature>
<feature type="helix" evidence="18">
    <location>
        <begin position="493"/>
        <end position="495"/>
    </location>
</feature>
<feature type="strand" evidence="18">
    <location>
        <begin position="499"/>
        <end position="502"/>
    </location>
</feature>
<feature type="strand" evidence="18">
    <location>
        <begin position="504"/>
        <end position="506"/>
    </location>
</feature>
<feature type="helix" evidence="18">
    <location>
        <begin position="508"/>
        <end position="516"/>
    </location>
</feature>
<feature type="strand" evidence="18">
    <location>
        <begin position="520"/>
        <end position="524"/>
    </location>
</feature>
<feature type="helix" evidence="18">
    <location>
        <begin position="526"/>
        <end position="534"/>
    </location>
</feature>
<feature type="strand" evidence="18">
    <location>
        <begin position="545"/>
        <end position="550"/>
    </location>
</feature>
<feature type="helix" evidence="18">
    <location>
        <begin position="551"/>
        <end position="556"/>
    </location>
</feature>
<feature type="helix" evidence="18">
    <location>
        <begin position="560"/>
        <end position="567"/>
    </location>
</feature>
<feature type="helix" evidence="18">
    <location>
        <begin position="572"/>
        <end position="574"/>
    </location>
</feature>
<feature type="helix" evidence="18">
    <location>
        <begin position="580"/>
        <end position="583"/>
    </location>
</feature>
<feature type="helix" evidence="18">
    <location>
        <begin position="585"/>
        <end position="593"/>
    </location>
</feature>
<feature type="helix" evidence="18">
    <location>
        <begin position="595"/>
        <end position="597"/>
    </location>
</feature>
<feature type="strand" evidence="18">
    <location>
        <begin position="601"/>
        <end position="607"/>
    </location>
</feature>
<feature type="helix" evidence="18">
    <location>
        <begin position="611"/>
        <end position="620"/>
    </location>
</feature>
<feature type="strand" evidence="18">
    <location>
        <begin position="625"/>
        <end position="629"/>
    </location>
</feature>
<feature type="helix" evidence="18">
    <location>
        <begin position="635"/>
        <end position="638"/>
    </location>
</feature>
<feature type="strand" evidence="18">
    <location>
        <begin position="639"/>
        <end position="645"/>
    </location>
</feature>
<feature type="helix" evidence="18">
    <location>
        <begin position="648"/>
        <end position="650"/>
    </location>
</feature>
<feature type="helix" evidence="18">
    <location>
        <begin position="651"/>
        <end position="660"/>
    </location>
</feature>
<feature type="strand" evidence="18">
    <location>
        <begin position="667"/>
        <end position="670"/>
    </location>
</feature>
<feature type="helix" evidence="18">
    <location>
        <begin position="674"/>
        <end position="686"/>
    </location>
</feature>
<feature type="strand" evidence="18">
    <location>
        <begin position="691"/>
        <end position="693"/>
    </location>
</feature>
<feature type="helix" evidence="18">
    <location>
        <begin position="704"/>
        <end position="712"/>
    </location>
</feature>
<feature type="strand" evidence="18">
    <location>
        <begin position="717"/>
        <end position="720"/>
    </location>
</feature>
<feature type="strand" evidence="18">
    <location>
        <begin position="734"/>
        <end position="740"/>
    </location>
</feature>
<feature type="helix" evidence="18">
    <location>
        <begin position="745"/>
        <end position="752"/>
    </location>
</feature>
<feature type="helix" evidence="18">
    <location>
        <begin position="753"/>
        <end position="755"/>
    </location>
</feature>
<feature type="strand" evidence="18">
    <location>
        <begin position="757"/>
        <end position="760"/>
    </location>
</feature>
<feature type="strand" evidence="18">
    <location>
        <begin position="763"/>
        <end position="768"/>
    </location>
</feature>
<feature type="helix" evidence="18">
    <location>
        <begin position="770"/>
        <end position="775"/>
    </location>
</feature>
<feature type="helix" evidence="18">
    <location>
        <begin position="776"/>
        <end position="784"/>
    </location>
</feature>
<feature type="helix" evidence="18">
    <location>
        <begin position="793"/>
        <end position="796"/>
    </location>
</feature>
<feature type="helix" evidence="18">
    <location>
        <begin position="799"/>
        <end position="801"/>
    </location>
</feature>
<evidence type="ECO:0000255" key="1">
    <source>
        <dbReference type="PROSITE-ProRule" id="PRU00541"/>
    </source>
</evidence>
<evidence type="ECO:0000255" key="2">
    <source>
        <dbReference type="PROSITE-ProRule" id="PRU00542"/>
    </source>
</evidence>
<evidence type="ECO:0000255" key="3">
    <source>
        <dbReference type="PROSITE-ProRule" id="PRU00552"/>
    </source>
</evidence>
<evidence type="ECO:0000256" key="4">
    <source>
        <dbReference type="SAM" id="MobiDB-lite"/>
    </source>
</evidence>
<evidence type="ECO:0000269" key="5">
    <source>
    </source>
</evidence>
<evidence type="ECO:0000269" key="6">
    <source>
    </source>
</evidence>
<evidence type="ECO:0000269" key="7">
    <source>
    </source>
</evidence>
<evidence type="ECO:0000269" key="8">
    <source>
    </source>
</evidence>
<evidence type="ECO:0000269" key="9">
    <source>
    </source>
</evidence>
<evidence type="ECO:0000269" key="10">
    <source>
    </source>
</evidence>
<evidence type="ECO:0000269" key="11">
    <source>
    </source>
</evidence>
<evidence type="ECO:0000303" key="12">
    <source>
    </source>
</evidence>
<evidence type="ECO:0000305" key="13"/>
<evidence type="ECO:0000312" key="14">
    <source>
        <dbReference type="HGNC" id="HGNC:17347"/>
    </source>
</evidence>
<evidence type="ECO:0007744" key="15">
    <source>
    </source>
</evidence>
<evidence type="ECO:0007744" key="16">
    <source>
    </source>
</evidence>
<evidence type="ECO:0007744" key="17">
    <source>
    </source>
</evidence>
<evidence type="ECO:0007829" key="18">
    <source>
        <dbReference type="PDB" id="4NHO"/>
    </source>
</evidence>
<evidence type="ECO:0007829" key="19">
    <source>
        <dbReference type="PDB" id="8Q91"/>
    </source>
</evidence>
<evidence type="ECO:0007829" key="20">
    <source>
        <dbReference type="PDB" id="8QOZ"/>
    </source>
</evidence>
<evidence type="ECO:0007829" key="21">
    <source>
        <dbReference type="PDB" id="8RC0"/>
    </source>
</evidence>
<dbReference type="EC" id="3.6.4.13" evidence="13"/>
<dbReference type="EMBL" id="AF026402">
    <property type="protein sequence ID" value="AAB87902.1"/>
    <property type="molecule type" value="mRNA"/>
</dbReference>
<dbReference type="EMBL" id="AK294877">
    <property type="protein sequence ID" value="BAG57976.1"/>
    <property type="molecule type" value="mRNA"/>
</dbReference>
<dbReference type="EMBL" id="AK312379">
    <property type="protein sequence ID" value="BAG35297.1"/>
    <property type="molecule type" value="mRNA"/>
</dbReference>
<dbReference type="EMBL" id="AC117498">
    <property type="status" value="NOT_ANNOTATED_CDS"/>
    <property type="molecule type" value="Genomic_DNA"/>
</dbReference>
<dbReference type="EMBL" id="CH471111">
    <property type="protein sequence ID" value="EAW58011.1"/>
    <property type="molecule type" value="Genomic_DNA"/>
</dbReference>
<dbReference type="EMBL" id="BC002366">
    <property type="protein sequence ID" value="AAH02366.1"/>
    <property type="molecule type" value="mRNA"/>
</dbReference>
<dbReference type="CCDS" id="CCDS8770.1">
    <molecule id="Q9BUQ8-1"/>
</dbReference>
<dbReference type="RefSeq" id="NP_004809.2">
    <molecule id="Q9BUQ8-1"/>
    <property type="nucleotide sequence ID" value="NM_004818.2"/>
</dbReference>
<dbReference type="PDB" id="3JCR">
    <property type="method" value="EM"/>
    <property type="resolution" value="7.00 A"/>
    <property type="chains" value="F=1-820"/>
</dbReference>
<dbReference type="PDB" id="4NHO">
    <property type="method" value="X-ray"/>
    <property type="resolution" value="2.00 A"/>
    <property type="chains" value="A=338-820"/>
</dbReference>
<dbReference type="PDB" id="6AH0">
    <property type="method" value="EM"/>
    <property type="resolution" value="5.70 A"/>
    <property type="chains" value="X=1-820"/>
</dbReference>
<dbReference type="PDB" id="6QW6">
    <property type="method" value="EM"/>
    <property type="resolution" value="2.92 A"/>
    <property type="chains" value="5X=1-820"/>
</dbReference>
<dbReference type="PDB" id="6QX9">
    <property type="method" value="EM"/>
    <property type="resolution" value="3.28 A"/>
    <property type="chains" value="5X=1-820"/>
</dbReference>
<dbReference type="PDB" id="8H6E">
    <property type="method" value="EM"/>
    <property type="resolution" value="3.20 A"/>
    <property type="chains" value="4U=1-820"/>
</dbReference>
<dbReference type="PDB" id="8H6J">
    <property type="method" value="EM"/>
    <property type="resolution" value="3.25 A"/>
    <property type="chains" value="4U=1-820"/>
</dbReference>
<dbReference type="PDB" id="8Q7W">
    <property type="method" value="EM"/>
    <property type="resolution" value="3.90 A"/>
    <property type="chains" value="E=1-820"/>
</dbReference>
<dbReference type="PDB" id="8Q7X">
    <property type="method" value="EM"/>
    <property type="resolution" value="4.60 A"/>
    <property type="chains" value="E=1-820"/>
</dbReference>
<dbReference type="PDB" id="8Q91">
    <property type="method" value="EM"/>
    <property type="resolution" value="3.10 A"/>
    <property type="chains" value="D=1-820"/>
</dbReference>
<dbReference type="PDB" id="8QOZ">
    <property type="method" value="EM"/>
    <property type="resolution" value="3.10 A"/>
    <property type="chains" value="G=1-820"/>
</dbReference>
<dbReference type="PDB" id="8QP8">
    <property type="method" value="EM"/>
    <property type="resolution" value="3.50 A"/>
    <property type="chains" value="G=1-820"/>
</dbReference>
<dbReference type="PDB" id="8QP9">
    <property type="method" value="EM"/>
    <property type="resolution" value="4.10 A"/>
    <property type="chains" value="G=1-820"/>
</dbReference>
<dbReference type="PDB" id="8QPA">
    <property type="method" value="EM"/>
    <property type="resolution" value="3.70 A"/>
    <property type="chains" value="G=1-820"/>
</dbReference>
<dbReference type="PDB" id="8QPB">
    <property type="method" value="EM"/>
    <property type="resolution" value="3.70 A"/>
    <property type="chains" value="G=1-820"/>
</dbReference>
<dbReference type="PDB" id="8QPK">
    <property type="method" value="EM"/>
    <property type="resolution" value="4.20 A"/>
    <property type="chains" value="G=1-820"/>
</dbReference>
<dbReference type="PDB" id="8QXD">
    <property type="method" value="EM"/>
    <property type="resolution" value="9.60 A"/>
    <property type="chains" value="G=1-820"/>
</dbReference>
<dbReference type="PDB" id="8R08">
    <property type="method" value="EM"/>
    <property type="resolution" value="6.10 A"/>
    <property type="chains" value="G=1-820"/>
</dbReference>
<dbReference type="PDB" id="8R09">
    <property type="method" value="EM"/>
    <property type="resolution" value="4.30 A"/>
    <property type="chains" value="G=1-820"/>
</dbReference>
<dbReference type="PDB" id="8R0A">
    <property type="method" value="EM"/>
    <property type="resolution" value="5.80 A"/>
    <property type="chains" value="G=1-820"/>
</dbReference>
<dbReference type="PDB" id="8R0B">
    <property type="method" value="EM"/>
    <property type="resolution" value="4.40 A"/>
    <property type="chains" value="G=1-820"/>
</dbReference>
<dbReference type="PDB" id="8RC0">
    <property type="method" value="EM"/>
    <property type="resolution" value="3.20 A"/>
    <property type="chains" value="D=1-820"/>
</dbReference>
<dbReference type="PDB" id="8RM5">
    <property type="method" value="EM"/>
    <property type="resolution" value="6.90 A"/>
    <property type="chains" value="G=1-820"/>
</dbReference>
<dbReference type="PDB" id="8Y6O">
    <property type="method" value="EM"/>
    <property type="resolution" value="3.38 A"/>
    <property type="chains" value="I=1-820"/>
</dbReference>
<dbReference type="PDBsum" id="3JCR"/>
<dbReference type="PDBsum" id="4NHO"/>
<dbReference type="PDBsum" id="6AH0"/>
<dbReference type="PDBsum" id="6QW6"/>
<dbReference type="PDBsum" id="6QX9"/>
<dbReference type="PDBsum" id="8H6E"/>
<dbReference type="PDBsum" id="8H6J"/>
<dbReference type="PDBsum" id="8Q7W"/>
<dbReference type="PDBsum" id="8Q7X"/>
<dbReference type="PDBsum" id="8Q91"/>
<dbReference type="PDBsum" id="8QOZ"/>
<dbReference type="PDBsum" id="8QP8"/>
<dbReference type="PDBsum" id="8QP9"/>
<dbReference type="PDBsum" id="8QPA"/>
<dbReference type="PDBsum" id="8QPB"/>
<dbReference type="PDBsum" id="8QPK"/>
<dbReference type="PDBsum" id="8QXD"/>
<dbReference type="PDBsum" id="8R08"/>
<dbReference type="PDBsum" id="8R09"/>
<dbReference type="PDBsum" id="8R0A"/>
<dbReference type="PDBsum" id="8R0B"/>
<dbReference type="PDBsum" id="8RC0"/>
<dbReference type="PDBsum" id="8RM5"/>
<dbReference type="PDBsum" id="8Y6O"/>
<dbReference type="EMDB" id="EMD-18235"/>
<dbReference type="EMDB" id="EMD-18237"/>
<dbReference type="EMDB" id="EMD-18267"/>
<dbReference type="EMDB" id="EMD-18542"/>
<dbReference type="EMDB" id="EMD-18544"/>
<dbReference type="EMDB" id="EMD-18545"/>
<dbReference type="EMDB" id="EMD-18546"/>
<dbReference type="EMDB" id="EMD-18547"/>
<dbReference type="EMDB" id="EMD-18555"/>
<dbReference type="EMDB" id="EMD-18718"/>
<dbReference type="EMDB" id="EMD-18786"/>
<dbReference type="EMDB" id="EMD-18787"/>
<dbReference type="EMDB" id="EMD-18788"/>
<dbReference type="EMDB" id="EMD-18789"/>
<dbReference type="EMDB" id="EMD-19041"/>
<dbReference type="EMDB" id="EMD-19349"/>
<dbReference type="EMDB" id="EMD-34500"/>
<dbReference type="EMDB" id="EMD-34505"/>
<dbReference type="EMDB" id="EMD-38993"/>
<dbReference type="EMDB" id="EMD-4658"/>
<dbReference type="EMDB" id="EMD-4665"/>
<dbReference type="EMDB" id="EMD-9621"/>
<dbReference type="SMR" id="Q9BUQ8"/>
<dbReference type="BioGRID" id="114811">
    <property type="interactions" value="491"/>
</dbReference>
<dbReference type="ComplexPortal" id="CPX-2391">
    <property type="entry name" value="U4/U6.U5 small nuclear ribonucleoprotein complex"/>
</dbReference>
<dbReference type="CORUM" id="Q9BUQ8"/>
<dbReference type="DIP" id="DIP-34974N"/>
<dbReference type="FunCoup" id="Q9BUQ8">
    <property type="interactions" value="3375"/>
</dbReference>
<dbReference type="IntAct" id="Q9BUQ8">
    <property type="interactions" value="109"/>
</dbReference>
<dbReference type="MINT" id="Q9BUQ8"/>
<dbReference type="STRING" id="9606.ENSP00000310723"/>
<dbReference type="GlyGen" id="Q9BUQ8">
    <property type="glycosylation" value="1 site, 1 O-linked glycan (1 site)"/>
</dbReference>
<dbReference type="iPTMnet" id="Q9BUQ8"/>
<dbReference type="MetOSite" id="Q9BUQ8"/>
<dbReference type="PhosphoSitePlus" id="Q9BUQ8"/>
<dbReference type="SwissPalm" id="Q9BUQ8"/>
<dbReference type="BioMuta" id="DDX23"/>
<dbReference type="DMDM" id="160385708"/>
<dbReference type="jPOST" id="Q9BUQ8"/>
<dbReference type="MassIVE" id="Q9BUQ8"/>
<dbReference type="PaxDb" id="9606-ENSP00000310723"/>
<dbReference type="PeptideAtlas" id="Q9BUQ8"/>
<dbReference type="ProteomicsDB" id="4180"/>
<dbReference type="ProteomicsDB" id="79121">
    <molecule id="Q9BUQ8-1"/>
</dbReference>
<dbReference type="Pumba" id="Q9BUQ8"/>
<dbReference type="Antibodypedia" id="13695">
    <property type="antibodies" value="201 antibodies from 23 providers"/>
</dbReference>
<dbReference type="DNASU" id="9416"/>
<dbReference type="Ensembl" id="ENST00000308025.8">
    <molecule id="Q9BUQ8-1"/>
    <property type="protein sequence ID" value="ENSP00000310723.2"/>
    <property type="gene ID" value="ENSG00000174243.11"/>
</dbReference>
<dbReference type="Ensembl" id="ENST00000547135.5">
    <molecule id="Q9BUQ8-2"/>
    <property type="protein sequence ID" value="ENSP00000446770.1"/>
    <property type="gene ID" value="ENSG00000174243.11"/>
</dbReference>
<dbReference type="GeneID" id="9416"/>
<dbReference type="KEGG" id="hsa:9416"/>
<dbReference type="MANE-Select" id="ENST00000308025.8">
    <property type="protein sequence ID" value="ENSP00000310723.2"/>
    <property type="RefSeq nucleotide sequence ID" value="NM_004818.3"/>
    <property type="RefSeq protein sequence ID" value="NP_004809.2"/>
</dbReference>
<dbReference type="UCSC" id="uc001rsm.4">
    <molecule id="Q9BUQ8-1"/>
    <property type="organism name" value="human"/>
</dbReference>
<dbReference type="AGR" id="HGNC:17347"/>
<dbReference type="CTD" id="9416"/>
<dbReference type="DisGeNET" id="9416"/>
<dbReference type="GeneCards" id="DDX23"/>
<dbReference type="HGNC" id="HGNC:17347">
    <property type="gene designation" value="DDX23"/>
</dbReference>
<dbReference type="HPA" id="ENSG00000174243">
    <property type="expression patterns" value="Low tissue specificity"/>
</dbReference>
<dbReference type="MIM" id="612172">
    <property type="type" value="gene"/>
</dbReference>
<dbReference type="neXtProt" id="NX_Q9BUQ8"/>
<dbReference type="OpenTargets" id="ENSG00000174243"/>
<dbReference type="PharmGKB" id="PA134934941"/>
<dbReference type="VEuPathDB" id="HostDB:ENSG00000174243"/>
<dbReference type="eggNOG" id="KOG0333">
    <property type="taxonomic scope" value="Eukaryota"/>
</dbReference>
<dbReference type="GeneTree" id="ENSGT00940000155606"/>
<dbReference type="HOGENOM" id="CLU_003041_11_0_1"/>
<dbReference type="InParanoid" id="Q9BUQ8"/>
<dbReference type="OMA" id="ARDIKHM"/>
<dbReference type="OrthoDB" id="196131at2759"/>
<dbReference type="PAN-GO" id="Q9BUQ8">
    <property type="GO annotations" value="3 GO annotations based on evolutionary models"/>
</dbReference>
<dbReference type="PhylomeDB" id="Q9BUQ8"/>
<dbReference type="TreeFam" id="TF300527"/>
<dbReference type="PathwayCommons" id="Q9BUQ8"/>
<dbReference type="Reactome" id="R-HSA-72163">
    <property type="pathway name" value="mRNA Splicing - Major Pathway"/>
</dbReference>
<dbReference type="Reactome" id="R-HSA-72165">
    <property type="pathway name" value="mRNA Splicing - Minor Pathway"/>
</dbReference>
<dbReference type="SignaLink" id="Q9BUQ8"/>
<dbReference type="SIGNOR" id="Q9BUQ8"/>
<dbReference type="BioGRID-ORCS" id="9416">
    <property type="hits" value="675 hits in 1166 CRISPR screens"/>
</dbReference>
<dbReference type="CD-CODE" id="91857CE7">
    <property type="entry name" value="Nucleolus"/>
</dbReference>
<dbReference type="ChiTaRS" id="DDX23">
    <property type="organism name" value="human"/>
</dbReference>
<dbReference type="EvolutionaryTrace" id="Q9BUQ8"/>
<dbReference type="GeneWiki" id="DDX23"/>
<dbReference type="GenomeRNAi" id="9416"/>
<dbReference type="Pharos" id="Q9BUQ8">
    <property type="development level" value="Tbio"/>
</dbReference>
<dbReference type="PRO" id="PR:Q9BUQ8"/>
<dbReference type="Proteomes" id="UP000005640">
    <property type="component" value="Chromosome 12"/>
</dbReference>
<dbReference type="RNAct" id="Q9BUQ8">
    <property type="molecule type" value="protein"/>
</dbReference>
<dbReference type="Bgee" id="ENSG00000174243">
    <property type="expression patterns" value="Expressed in calcaneal tendon and 201 other cell types or tissues"/>
</dbReference>
<dbReference type="ExpressionAtlas" id="Q9BUQ8">
    <property type="expression patterns" value="baseline and differential"/>
</dbReference>
<dbReference type="GO" id="GO:0071013">
    <property type="term" value="C:catalytic step 2 spliceosome"/>
    <property type="evidence" value="ECO:0000314"/>
    <property type="project" value="UniProtKB"/>
</dbReference>
<dbReference type="GO" id="GO:0000785">
    <property type="term" value="C:chromatin"/>
    <property type="evidence" value="ECO:0000314"/>
    <property type="project" value="UniProtKB"/>
</dbReference>
<dbReference type="GO" id="GO:0070062">
    <property type="term" value="C:extracellular exosome"/>
    <property type="evidence" value="ECO:0007005"/>
    <property type="project" value="UniProtKB"/>
</dbReference>
<dbReference type="GO" id="GO:0005730">
    <property type="term" value="C:nucleolus"/>
    <property type="evidence" value="ECO:0000314"/>
    <property type="project" value="HPA"/>
</dbReference>
<dbReference type="GO" id="GO:0005654">
    <property type="term" value="C:nucleoplasm"/>
    <property type="evidence" value="ECO:0000314"/>
    <property type="project" value="HPA"/>
</dbReference>
<dbReference type="GO" id="GO:0005634">
    <property type="term" value="C:nucleus"/>
    <property type="evidence" value="ECO:0000314"/>
    <property type="project" value="UniProtKB"/>
</dbReference>
<dbReference type="GO" id="GO:0046540">
    <property type="term" value="C:U4/U6 x U5 tri-snRNP complex"/>
    <property type="evidence" value="ECO:0000314"/>
    <property type="project" value="MGI"/>
</dbReference>
<dbReference type="GO" id="GO:0005682">
    <property type="term" value="C:U5 snRNP"/>
    <property type="evidence" value="ECO:0000314"/>
    <property type="project" value="HGNC-UCL"/>
</dbReference>
<dbReference type="GO" id="GO:0005524">
    <property type="term" value="F:ATP binding"/>
    <property type="evidence" value="ECO:0007669"/>
    <property type="project" value="UniProtKB-KW"/>
</dbReference>
<dbReference type="GO" id="GO:0016887">
    <property type="term" value="F:ATP hydrolysis activity"/>
    <property type="evidence" value="ECO:0007669"/>
    <property type="project" value="RHEA"/>
</dbReference>
<dbReference type="GO" id="GO:0003729">
    <property type="term" value="F:mRNA binding"/>
    <property type="evidence" value="ECO:0000318"/>
    <property type="project" value="GO_Central"/>
</dbReference>
<dbReference type="GO" id="GO:0003723">
    <property type="term" value="F:RNA binding"/>
    <property type="evidence" value="ECO:0007005"/>
    <property type="project" value="UniProtKB"/>
</dbReference>
<dbReference type="GO" id="GO:0003724">
    <property type="term" value="F:RNA helicase activity"/>
    <property type="evidence" value="ECO:0000304"/>
    <property type="project" value="Reactome"/>
</dbReference>
<dbReference type="GO" id="GO:0000354">
    <property type="term" value="P:cis assembly of pre-catalytic spliceosome"/>
    <property type="evidence" value="ECO:0000305"/>
    <property type="project" value="HGNC-UCL"/>
</dbReference>
<dbReference type="GO" id="GO:0000398">
    <property type="term" value="P:mRNA splicing, via spliceosome"/>
    <property type="evidence" value="ECO:0000318"/>
    <property type="project" value="GO_Central"/>
</dbReference>
<dbReference type="GO" id="GO:0062176">
    <property type="term" value="P:R-loop processing"/>
    <property type="evidence" value="ECO:0000314"/>
    <property type="project" value="UniProtKB"/>
</dbReference>
<dbReference type="GO" id="GO:0008380">
    <property type="term" value="P:RNA splicing"/>
    <property type="evidence" value="ECO:0000304"/>
    <property type="project" value="ProtInc"/>
</dbReference>
<dbReference type="GO" id="GO:0000375">
    <property type="term" value="P:RNA splicing, via transesterification reactions"/>
    <property type="evidence" value="ECO:0000304"/>
    <property type="project" value="UniProtKB"/>
</dbReference>
<dbReference type="CDD" id="cd17945">
    <property type="entry name" value="DEADc_DDX23"/>
    <property type="match status" value="1"/>
</dbReference>
<dbReference type="CDD" id="cd18787">
    <property type="entry name" value="SF2_C_DEAD"/>
    <property type="match status" value="1"/>
</dbReference>
<dbReference type="DisProt" id="DP02332"/>
<dbReference type="FunFam" id="3.40.50.300:FF:000322">
    <property type="entry name" value="probable ATP-dependent RNA helicase DDX23"/>
    <property type="match status" value="1"/>
</dbReference>
<dbReference type="FunFam" id="3.40.50.300:FF:000520">
    <property type="entry name" value="probable ATP-dependent RNA helicase DDX23"/>
    <property type="match status" value="1"/>
</dbReference>
<dbReference type="Gene3D" id="3.40.50.300">
    <property type="entry name" value="P-loop containing nucleotide triphosphate hydrolases"/>
    <property type="match status" value="2"/>
</dbReference>
<dbReference type="InterPro" id="IPR011545">
    <property type="entry name" value="DEAD/DEAH_box_helicase_dom"/>
</dbReference>
<dbReference type="InterPro" id="IPR014001">
    <property type="entry name" value="Helicase_ATP-bd"/>
</dbReference>
<dbReference type="InterPro" id="IPR001650">
    <property type="entry name" value="Helicase_C-like"/>
</dbReference>
<dbReference type="InterPro" id="IPR027417">
    <property type="entry name" value="P-loop_NTPase"/>
</dbReference>
<dbReference type="InterPro" id="IPR000629">
    <property type="entry name" value="RNA-helicase_DEAD-box_CS"/>
</dbReference>
<dbReference type="InterPro" id="IPR014014">
    <property type="entry name" value="RNA_helicase_DEAD_Q_motif"/>
</dbReference>
<dbReference type="PANTHER" id="PTHR47958">
    <property type="entry name" value="ATP-DEPENDENT RNA HELICASE DBP3"/>
    <property type="match status" value="1"/>
</dbReference>
<dbReference type="Pfam" id="PF25430">
    <property type="entry name" value="DDX23"/>
    <property type="match status" value="1"/>
</dbReference>
<dbReference type="Pfam" id="PF00270">
    <property type="entry name" value="DEAD"/>
    <property type="match status" value="1"/>
</dbReference>
<dbReference type="Pfam" id="PF00271">
    <property type="entry name" value="Helicase_C"/>
    <property type="match status" value="1"/>
</dbReference>
<dbReference type="SMART" id="SM00487">
    <property type="entry name" value="DEXDc"/>
    <property type="match status" value="1"/>
</dbReference>
<dbReference type="SMART" id="SM00490">
    <property type="entry name" value="HELICc"/>
    <property type="match status" value="1"/>
</dbReference>
<dbReference type="SUPFAM" id="SSF52540">
    <property type="entry name" value="P-loop containing nucleoside triphosphate hydrolases"/>
    <property type="match status" value="1"/>
</dbReference>
<dbReference type="PROSITE" id="PS00039">
    <property type="entry name" value="DEAD_ATP_HELICASE"/>
    <property type="match status" value="1"/>
</dbReference>
<dbReference type="PROSITE" id="PS51192">
    <property type="entry name" value="HELICASE_ATP_BIND_1"/>
    <property type="match status" value="1"/>
</dbReference>
<dbReference type="PROSITE" id="PS51194">
    <property type="entry name" value="HELICASE_CTER"/>
    <property type="match status" value="1"/>
</dbReference>
<dbReference type="PROSITE" id="PS51195">
    <property type="entry name" value="Q_MOTIF"/>
    <property type="match status" value="1"/>
</dbReference>
<reference key="1">
    <citation type="journal article" date="1997" name="RNA">
        <title>The human U5 snRNP-specific 100-kD protein is an RS domain-containing, putative RNA helicase with significant homology to the yeast splicing factor Prp28p.</title>
        <authorList>
            <person name="Teigelkamp S."/>
            <person name="Mundt C."/>
            <person name="Achsel T."/>
            <person name="Will C.L."/>
            <person name="Luehrmann R."/>
        </authorList>
    </citation>
    <scope>NUCLEOTIDE SEQUENCE [MRNA] (ISOFORM 1)</scope>
    <scope>PROTEIN SEQUENCE OF 272-290; 409-419 AND 433-441</scope>
    <scope>SUBCELLULAR LOCATION</scope>
    <scope>PHOSPHORYLATION</scope>
    <scope>IDENTIFICATION IN U5 AND U5/4/6 SNRNP COMPLEXES</scope>
</reference>
<reference key="2">
    <citation type="journal article" date="2004" name="Nat. Genet.">
        <title>Complete sequencing and characterization of 21,243 full-length human cDNAs.</title>
        <authorList>
            <person name="Ota T."/>
            <person name="Suzuki Y."/>
            <person name="Nishikawa T."/>
            <person name="Otsuki T."/>
            <person name="Sugiyama T."/>
            <person name="Irie R."/>
            <person name="Wakamatsu A."/>
            <person name="Hayashi K."/>
            <person name="Sato H."/>
            <person name="Nagai K."/>
            <person name="Kimura K."/>
            <person name="Makita H."/>
            <person name="Sekine M."/>
            <person name="Obayashi M."/>
            <person name="Nishi T."/>
            <person name="Shibahara T."/>
            <person name="Tanaka T."/>
            <person name="Ishii S."/>
            <person name="Yamamoto J."/>
            <person name="Saito K."/>
            <person name="Kawai Y."/>
            <person name="Isono Y."/>
            <person name="Nakamura Y."/>
            <person name="Nagahari K."/>
            <person name="Murakami K."/>
            <person name="Yasuda T."/>
            <person name="Iwayanagi T."/>
            <person name="Wagatsuma M."/>
            <person name="Shiratori A."/>
            <person name="Sudo H."/>
            <person name="Hosoiri T."/>
            <person name="Kaku Y."/>
            <person name="Kodaira H."/>
            <person name="Kondo H."/>
            <person name="Sugawara M."/>
            <person name="Takahashi M."/>
            <person name="Kanda K."/>
            <person name="Yokoi T."/>
            <person name="Furuya T."/>
            <person name="Kikkawa E."/>
            <person name="Omura Y."/>
            <person name="Abe K."/>
            <person name="Kamihara K."/>
            <person name="Katsuta N."/>
            <person name="Sato K."/>
            <person name="Tanikawa M."/>
            <person name="Yamazaki M."/>
            <person name="Ninomiya K."/>
            <person name="Ishibashi T."/>
            <person name="Yamashita H."/>
            <person name="Murakawa K."/>
            <person name="Fujimori K."/>
            <person name="Tanai H."/>
            <person name="Kimata M."/>
            <person name="Watanabe M."/>
            <person name="Hiraoka S."/>
            <person name="Chiba Y."/>
            <person name="Ishida S."/>
            <person name="Ono Y."/>
            <person name="Takiguchi S."/>
            <person name="Watanabe S."/>
            <person name="Yosida M."/>
            <person name="Hotuta T."/>
            <person name="Kusano J."/>
            <person name="Kanehori K."/>
            <person name="Takahashi-Fujii A."/>
            <person name="Hara H."/>
            <person name="Tanase T.-O."/>
            <person name="Nomura Y."/>
            <person name="Togiya S."/>
            <person name="Komai F."/>
            <person name="Hara R."/>
            <person name="Takeuchi K."/>
            <person name="Arita M."/>
            <person name="Imose N."/>
            <person name="Musashino K."/>
            <person name="Yuuki H."/>
            <person name="Oshima A."/>
            <person name="Sasaki N."/>
            <person name="Aotsuka S."/>
            <person name="Yoshikawa Y."/>
            <person name="Matsunawa H."/>
            <person name="Ichihara T."/>
            <person name="Shiohata N."/>
            <person name="Sano S."/>
            <person name="Moriya S."/>
            <person name="Momiyama H."/>
            <person name="Satoh N."/>
            <person name="Takami S."/>
            <person name="Terashima Y."/>
            <person name="Suzuki O."/>
            <person name="Nakagawa S."/>
            <person name="Senoh A."/>
            <person name="Mizoguchi H."/>
            <person name="Goto Y."/>
            <person name="Shimizu F."/>
            <person name="Wakebe H."/>
            <person name="Hishigaki H."/>
            <person name="Watanabe T."/>
            <person name="Sugiyama A."/>
            <person name="Takemoto M."/>
            <person name="Kawakami B."/>
            <person name="Yamazaki M."/>
            <person name="Watanabe K."/>
            <person name="Kumagai A."/>
            <person name="Itakura S."/>
            <person name="Fukuzumi Y."/>
            <person name="Fujimori Y."/>
            <person name="Komiyama M."/>
            <person name="Tashiro H."/>
            <person name="Tanigami A."/>
            <person name="Fujiwara T."/>
            <person name="Ono T."/>
            <person name="Yamada K."/>
            <person name="Fujii Y."/>
            <person name="Ozaki K."/>
            <person name="Hirao M."/>
            <person name="Ohmori Y."/>
            <person name="Kawabata A."/>
            <person name="Hikiji T."/>
            <person name="Kobatake N."/>
            <person name="Inagaki H."/>
            <person name="Ikema Y."/>
            <person name="Okamoto S."/>
            <person name="Okitani R."/>
            <person name="Kawakami T."/>
            <person name="Noguchi S."/>
            <person name="Itoh T."/>
            <person name="Shigeta K."/>
            <person name="Senba T."/>
            <person name="Matsumura K."/>
            <person name="Nakajima Y."/>
            <person name="Mizuno T."/>
            <person name="Morinaga M."/>
            <person name="Sasaki M."/>
            <person name="Togashi T."/>
            <person name="Oyama M."/>
            <person name="Hata H."/>
            <person name="Watanabe M."/>
            <person name="Komatsu T."/>
            <person name="Mizushima-Sugano J."/>
            <person name="Satoh T."/>
            <person name="Shirai Y."/>
            <person name="Takahashi Y."/>
            <person name="Nakagawa K."/>
            <person name="Okumura K."/>
            <person name="Nagase T."/>
            <person name="Nomura N."/>
            <person name="Kikuchi H."/>
            <person name="Masuho Y."/>
            <person name="Yamashita R."/>
            <person name="Nakai K."/>
            <person name="Yada T."/>
            <person name="Nakamura Y."/>
            <person name="Ohara O."/>
            <person name="Isogai T."/>
            <person name="Sugano S."/>
        </authorList>
    </citation>
    <scope>NUCLEOTIDE SEQUENCE [LARGE SCALE MRNA] (ISOFORMS 1 AND 2)</scope>
    <source>
        <tissue>Amygdala</tissue>
        <tissue>Brain</tissue>
    </source>
</reference>
<reference key="3">
    <citation type="journal article" date="2006" name="Nature">
        <title>The finished DNA sequence of human chromosome 12.</title>
        <authorList>
            <person name="Scherer S.E."/>
            <person name="Muzny D.M."/>
            <person name="Buhay C.J."/>
            <person name="Chen R."/>
            <person name="Cree A."/>
            <person name="Ding Y."/>
            <person name="Dugan-Rocha S."/>
            <person name="Gill R."/>
            <person name="Gunaratne P."/>
            <person name="Harris R.A."/>
            <person name="Hawes A.C."/>
            <person name="Hernandez J."/>
            <person name="Hodgson A.V."/>
            <person name="Hume J."/>
            <person name="Jackson A."/>
            <person name="Khan Z.M."/>
            <person name="Kovar-Smith C."/>
            <person name="Lewis L.R."/>
            <person name="Lozado R.J."/>
            <person name="Metzker M.L."/>
            <person name="Milosavljevic A."/>
            <person name="Miner G.R."/>
            <person name="Montgomery K.T."/>
            <person name="Morgan M.B."/>
            <person name="Nazareth L.V."/>
            <person name="Scott G."/>
            <person name="Sodergren E."/>
            <person name="Song X.-Z."/>
            <person name="Steffen D."/>
            <person name="Lovering R.C."/>
            <person name="Wheeler D.A."/>
            <person name="Worley K.C."/>
            <person name="Yuan Y."/>
            <person name="Zhang Z."/>
            <person name="Adams C.Q."/>
            <person name="Ansari-Lari M.A."/>
            <person name="Ayele M."/>
            <person name="Brown M.J."/>
            <person name="Chen G."/>
            <person name="Chen Z."/>
            <person name="Clerc-Blankenburg K.P."/>
            <person name="Davis C."/>
            <person name="Delgado O."/>
            <person name="Dinh H.H."/>
            <person name="Draper H."/>
            <person name="Gonzalez-Garay M.L."/>
            <person name="Havlak P."/>
            <person name="Jackson L.R."/>
            <person name="Jacob L.S."/>
            <person name="Kelly S.H."/>
            <person name="Li L."/>
            <person name="Li Z."/>
            <person name="Liu J."/>
            <person name="Liu W."/>
            <person name="Lu J."/>
            <person name="Maheshwari M."/>
            <person name="Nguyen B.-V."/>
            <person name="Okwuonu G.O."/>
            <person name="Pasternak S."/>
            <person name="Perez L.M."/>
            <person name="Plopper F.J.H."/>
            <person name="Santibanez J."/>
            <person name="Shen H."/>
            <person name="Tabor P.E."/>
            <person name="Verduzco D."/>
            <person name="Waldron L."/>
            <person name="Wang Q."/>
            <person name="Williams G.A."/>
            <person name="Zhang J."/>
            <person name="Zhou J."/>
            <person name="Allen C.C."/>
            <person name="Amin A.G."/>
            <person name="Anyalebechi V."/>
            <person name="Bailey M."/>
            <person name="Barbaria J.A."/>
            <person name="Bimage K.E."/>
            <person name="Bryant N.P."/>
            <person name="Burch P.E."/>
            <person name="Burkett C.E."/>
            <person name="Burrell K.L."/>
            <person name="Calderon E."/>
            <person name="Cardenas V."/>
            <person name="Carter K."/>
            <person name="Casias K."/>
            <person name="Cavazos I."/>
            <person name="Cavazos S.R."/>
            <person name="Ceasar H."/>
            <person name="Chacko J."/>
            <person name="Chan S.N."/>
            <person name="Chavez D."/>
            <person name="Christopoulos C."/>
            <person name="Chu J."/>
            <person name="Cockrell R."/>
            <person name="Cox C.D."/>
            <person name="Dang M."/>
            <person name="Dathorne S.R."/>
            <person name="David R."/>
            <person name="Davis C.M."/>
            <person name="Davy-Carroll L."/>
            <person name="Deshazo D.R."/>
            <person name="Donlin J.E."/>
            <person name="D'Souza L."/>
            <person name="Eaves K.A."/>
            <person name="Egan A."/>
            <person name="Emery-Cohen A.J."/>
            <person name="Escotto M."/>
            <person name="Flagg N."/>
            <person name="Forbes L.D."/>
            <person name="Gabisi A.M."/>
            <person name="Garza M."/>
            <person name="Hamilton C."/>
            <person name="Henderson N."/>
            <person name="Hernandez O."/>
            <person name="Hines S."/>
            <person name="Hogues M.E."/>
            <person name="Huang M."/>
            <person name="Idlebird D.G."/>
            <person name="Johnson R."/>
            <person name="Jolivet A."/>
            <person name="Jones S."/>
            <person name="Kagan R."/>
            <person name="King L.M."/>
            <person name="Leal B."/>
            <person name="Lebow H."/>
            <person name="Lee S."/>
            <person name="LeVan J.M."/>
            <person name="Lewis L.C."/>
            <person name="London P."/>
            <person name="Lorensuhewa L.M."/>
            <person name="Loulseged H."/>
            <person name="Lovett D.A."/>
            <person name="Lucier A."/>
            <person name="Lucier R.L."/>
            <person name="Ma J."/>
            <person name="Madu R.C."/>
            <person name="Mapua P."/>
            <person name="Martindale A.D."/>
            <person name="Martinez E."/>
            <person name="Massey E."/>
            <person name="Mawhiney S."/>
            <person name="Meador M.G."/>
            <person name="Mendez S."/>
            <person name="Mercado C."/>
            <person name="Mercado I.C."/>
            <person name="Merritt C.E."/>
            <person name="Miner Z.L."/>
            <person name="Minja E."/>
            <person name="Mitchell T."/>
            <person name="Mohabbat F."/>
            <person name="Mohabbat K."/>
            <person name="Montgomery B."/>
            <person name="Moore N."/>
            <person name="Morris S."/>
            <person name="Munidasa M."/>
            <person name="Ngo R.N."/>
            <person name="Nguyen N.B."/>
            <person name="Nickerson E."/>
            <person name="Nwaokelemeh O.O."/>
            <person name="Nwokenkwo S."/>
            <person name="Obregon M."/>
            <person name="Oguh M."/>
            <person name="Oragunye N."/>
            <person name="Oviedo R.J."/>
            <person name="Parish B.J."/>
            <person name="Parker D.N."/>
            <person name="Parrish J."/>
            <person name="Parks K.L."/>
            <person name="Paul H.A."/>
            <person name="Payton B.A."/>
            <person name="Perez A."/>
            <person name="Perrin W."/>
            <person name="Pickens A."/>
            <person name="Primus E.L."/>
            <person name="Pu L.-L."/>
            <person name="Puazo M."/>
            <person name="Quiles M.M."/>
            <person name="Quiroz J.B."/>
            <person name="Rabata D."/>
            <person name="Reeves K."/>
            <person name="Ruiz S.J."/>
            <person name="Shao H."/>
            <person name="Sisson I."/>
            <person name="Sonaike T."/>
            <person name="Sorelle R.P."/>
            <person name="Sutton A.E."/>
            <person name="Svatek A.F."/>
            <person name="Svetz L.A."/>
            <person name="Tamerisa K.S."/>
            <person name="Taylor T.R."/>
            <person name="Teague B."/>
            <person name="Thomas N."/>
            <person name="Thorn R.D."/>
            <person name="Trejos Z.Y."/>
            <person name="Trevino B.K."/>
            <person name="Ukegbu O.N."/>
            <person name="Urban J.B."/>
            <person name="Vasquez L.I."/>
            <person name="Vera V.A."/>
            <person name="Villasana D.M."/>
            <person name="Wang L."/>
            <person name="Ward-Moore S."/>
            <person name="Warren J.T."/>
            <person name="Wei X."/>
            <person name="White F."/>
            <person name="Williamson A.L."/>
            <person name="Wleczyk R."/>
            <person name="Wooden H.S."/>
            <person name="Wooden S.H."/>
            <person name="Yen J."/>
            <person name="Yoon L."/>
            <person name="Yoon V."/>
            <person name="Zorrilla S.E."/>
            <person name="Nelson D."/>
            <person name="Kucherlapati R."/>
            <person name="Weinstock G."/>
            <person name="Gibbs R.A."/>
        </authorList>
    </citation>
    <scope>NUCLEOTIDE SEQUENCE [LARGE SCALE GENOMIC DNA]</scope>
</reference>
<reference key="4">
    <citation type="submission" date="2005-07" db="EMBL/GenBank/DDBJ databases">
        <authorList>
            <person name="Mural R.J."/>
            <person name="Istrail S."/>
            <person name="Sutton G.G."/>
            <person name="Florea L."/>
            <person name="Halpern A.L."/>
            <person name="Mobarry C.M."/>
            <person name="Lippert R."/>
            <person name="Walenz B."/>
            <person name="Shatkay H."/>
            <person name="Dew I."/>
            <person name="Miller J.R."/>
            <person name="Flanigan M.J."/>
            <person name="Edwards N.J."/>
            <person name="Bolanos R."/>
            <person name="Fasulo D."/>
            <person name="Halldorsson B.V."/>
            <person name="Hannenhalli S."/>
            <person name="Turner R."/>
            <person name="Yooseph S."/>
            <person name="Lu F."/>
            <person name="Nusskern D.R."/>
            <person name="Shue B.C."/>
            <person name="Zheng X.H."/>
            <person name="Zhong F."/>
            <person name="Delcher A.L."/>
            <person name="Huson D.H."/>
            <person name="Kravitz S.A."/>
            <person name="Mouchard L."/>
            <person name="Reinert K."/>
            <person name="Remington K.A."/>
            <person name="Clark A.G."/>
            <person name="Waterman M.S."/>
            <person name="Eichler E.E."/>
            <person name="Adams M.D."/>
            <person name="Hunkapiller M.W."/>
            <person name="Myers E.W."/>
            <person name="Venter J.C."/>
        </authorList>
    </citation>
    <scope>NUCLEOTIDE SEQUENCE [LARGE SCALE GENOMIC DNA]</scope>
</reference>
<reference key="5">
    <citation type="journal article" date="2004" name="Genome Res.">
        <title>The status, quality, and expansion of the NIH full-length cDNA project: the Mammalian Gene Collection (MGC).</title>
        <authorList>
            <consortium name="The MGC Project Team"/>
        </authorList>
    </citation>
    <scope>NUCLEOTIDE SEQUENCE [LARGE SCALE MRNA] (ISOFORM 1)</scope>
    <source>
        <tissue>Lung</tissue>
    </source>
</reference>
<reference key="6">
    <citation type="journal article" date="2002" name="RNA">
        <title>Purification and characterization of native spliceosomes suitable for three-dimensional structural analysis.</title>
        <authorList>
            <person name="Jurica M.S."/>
            <person name="Licklider L.J."/>
            <person name="Gygi S.P."/>
            <person name="Grigorieff N."/>
            <person name="Moore M.J."/>
        </authorList>
    </citation>
    <scope>IDENTIFICATION BY MASS SPECTROMETRY</scope>
    <scope>IDENTIFICATION IN THE SPLICEOSOMAL C COMPLEX</scope>
</reference>
<reference key="7">
    <citation type="journal article" date="2006" name="Cell">
        <title>Global, in vivo, and site-specific phosphorylation dynamics in signaling networks.</title>
        <authorList>
            <person name="Olsen J.V."/>
            <person name="Blagoev B."/>
            <person name="Gnad F."/>
            <person name="Macek B."/>
            <person name="Kumar C."/>
            <person name="Mortensen P."/>
            <person name="Mann M."/>
        </authorList>
    </citation>
    <scope>IDENTIFICATION BY MASS SPECTROMETRY [LARGE SCALE ANALYSIS]</scope>
    <source>
        <tissue>Cervix carcinoma</tissue>
    </source>
</reference>
<reference key="8">
    <citation type="journal article" date="2006" name="RNA">
        <title>The network of protein-protein interactions within the human U4/U6.U5 tri-snRNP.</title>
        <authorList>
            <person name="Liu S."/>
            <person name="Rauhut R."/>
            <person name="Vornlocher H.-P."/>
            <person name="Luehrmann R."/>
        </authorList>
    </citation>
    <scope>SUBUNIT</scope>
</reference>
<reference key="9">
    <citation type="journal article" date="2008" name="Nat. Struct. Mol. Biol.">
        <title>Phosphorylation of human PRP28 by SRPK2 is required for integration of the U4/U6-U5 tri-snRNP into the spliceosome.</title>
        <authorList>
            <person name="Mathew R."/>
            <person name="Hartmuth K."/>
            <person name="Moehlmann S."/>
            <person name="Urlaub H."/>
            <person name="Ficner R."/>
            <person name="Luehrmann R."/>
        </authorList>
    </citation>
    <scope>FUNCTION</scope>
    <scope>PHOSPHORYLATION BY SRPK2</scope>
</reference>
<reference key="10">
    <citation type="journal article" date="2010" name="Mol. Cancer Res.">
        <title>Interactions of ErbB4 and Kap1 connect the growth factor and DNA damage response pathways.</title>
        <authorList>
            <person name="Gilmore-Hebert M."/>
            <person name="Ramabhadran R."/>
            <person name="Stern D.F."/>
        </authorList>
    </citation>
    <scope>IDENTIFICATION BY MASS SPECTROMETRY</scope>
    <scope>INTERACTION WITH ERBB4</scope>
    <scope>SUBCELLULAR LOCATION</scope>
</reference>
<reference key="11">
    <citation type="journal article" date="2010" name="Sci. Signal.">
        <title>Quantitative phosphoproteomics reveals widespread full phosphorylation site occupancy during mitosis.</title>
        <authorList>
            <person name="Olsen J.V."/>
            <person name="Vermeulen M."/>
            <person name="Santamaria A."/>
            <person name="Kumar C."/>
            <person name="Miller M.L."/>
            <person name="Jensen L.J."/>
            <person name="Gnad F."/>
            <person name="Cox J."/>
            <person name="Jensen T.S."/>
            <person name="Nigg E.A."/>
            <person name="Brunak S."/>
            <person name="Mann M."/>
        </authorList>
    </citation>
    <scope>PHOSPHORYLATION [LARGE SCALE ANALYSIS] AT SER-14 AND SER-16</scope>
    <scope>IDENTIFICATION BY MASS SPECTROMETRY [LARGE SCALE ANALYSIS]</scope>
    <source>
        <tissue>Cervix carcinoma</tissue>
    </source>
</reference>
<reference key="12">
    <citation type="journal article" date="2011" name="BMC Syst. Biol.">
        <title>Initial characterization of the human central proteome.</title>
        <authorList>
            <person name="Burkard T.R."/>
            <person name="Planyavsky M."/>
            <person name="Kaupe I."/>
            <person name="Breitwieser F.P."/>
            <person name="Buerckstuemmer T."/>
            <person name="Bennett K.L."/>
            <person name="Superti-Furga G."/>
            <person name="Colinge J."/>
        </authorList>
    </citation>
    <scope>IDENTIFICATION BY MASS SPECTROMETRY [LARGE SCALE ANALYSIS]</scope>
</reference>
<reference key="13">
    <citation type="journal article" date="2011" name="Sci. Signal.">
        <title>System-wide temporal characterization of the proteome and phosphoproteome of human embryonic stem cell differentiation.</title>
        <authorList>
            <person name="Rigbolt K.T."/>
            <person name="Prokhorova T.A."/>
            <person name="Akimov V."/>
            <person name="Henningsen J."/>
            <person name="Johansen P.T."/>
            <person name="Kratchmarova I."/>
            <person name="Kassem M."/>
            <person name="Mann M."/>
            <person name="Olsen J.V."/>
            <person name="Blagoev B."/>
        </authorList>
    </citation>
    <scope>PHOSPHORYLATION [LARGE SCALE ANALYSIS] AT SER-14; SER-107 AND SER-109</scope>
    <scope>IDENTIFICATION BY MASS SPECTROMETRY [LARGE SCALE ANALYSIS]</scope>
</reference>
<reference key="14">
    <citation type="journal article" date="2012" name="Proc. Natl. Acad. Sci. U.S.A.">
        <title>N-terminal acetylome analyses and functional insights of the N-terminal acetyltransferase NatB.</title>
        <authorList>
            <person name="Van Damme P."/>
            <person name="Lasa M."/>
            <person name="Polevoda B."/>
            <person name="Gazquez C."/>
            <person name="Elosegui-Artola A."/>
            <person name="Kim D.S."/>
            <person name="De Juan-Pardo E."/>
            <person name="Demeyer K."/>
            <person name="Hole K."/>
            <person name="Larrea E."/>
            <person name="Timmerman E."/>
            <person name="Prieto J."/>
            <person name="Arnesen T."/>
            <person name="Sherman F."/>
            <person name="Gevaert K."/>
            <person name="Aldabe R."/>
        </authorList>
    </citation>
    <scope>IDENTIFICATION BY MASS SPECTROMETRY [LARGE SCALE ANALYSIS]</scope>
</reference>
<reference key="15">
    <citation type="journal article" date="2015" name="PLoS ONE">
        <title>Identification of Novel Proteins Co-Purifying with Cockayne Syndrome Group B (CSB) Reveals Potential Roles for CSB in RNA Metabolism and Chromatin Dynamics.</title>
        <authorList>
            <person name="Nicolai S."/>
            <person name="Filippi S."/>
            <person name="Caputo M."/>
            <person name="Cipak L."/>
            <person name="Gregan J."/>
            <person name="Ammerer G."/>
            <person name="Frontini M."/>
            <person name="Willems D."/>
            <person name="Prantera G."/>
            <person name="Balajee A.S."/>
            <person name="Proietti-De-Santis L."/>
        </authorList>
    </citation>
    <scope>INTERACTION WITH ERCC6</scope>
</reference>
<reference key="16">
    <citation type="journal article" date="2017" name="Cell Rep.">
        <title>Transcription Dynamics Prevent RNA-Mediated Genomic Instability through SRPK2-Dependent DDX23 Phosphorylation.</title>
        <authorList>
            <person name="Sridhara S.C."/>
            <person name="Carvalho S."/>
            <person name="Grosso A.R."/>
            <person name="Gallego-Paez L.M."/>
            <person name="Carmo-Fonseca M."/>
            <person name="de Almeida S.F."/>
        </authorList>
    </citation>
    <scope>FUNCTION</scope>
    <scope>SUBCELLULAR LOCATION</scope>
    <scope>DOMAIN</scope>
    <scope>PHOSPHORYLATION</scope>
</reference>
<reference key="17">
    <citation type="journal article" date="2017" name="Nat. Struct. Mol. Biol.">
        <title>Site-specific mapping of the human SUMO proteome reveals co-modification with phosphorylation.</title>
        <authorList>
            <person name="Hendriks I.A."/>
            <person name="Lyon D."/>
            <person name="Young C."/>
            <person name="Jensen L.J."/>
            <person name="Vertegaal A.C."/>
            <person name="Nielsen M.L."/>
        </authorList>
    </citation>
    <scope>SUMOYLATION [LARGE SCALE ANALYSIS] AT LYS-686 AND LYS-811</scope>
    <scope>IDENTIFICATION BY MASS SPECTROMETRY [LARGE SCALE ANALYSIS]</scope>
</reference>
<organism>
    <name type="scientific">Homo sapiens</name>
    <name type="common">Human</name>
    <dbReference type="NCBI Taxonomy" id="9606"/>
    <lineage>
        <taxon>Eukaryota</taxon>
        <taxon>Metazoa</taxon>
        <taxon>Chordata</taxon>
        <taxon>Craniata</taxon>
        <taxon>Vertebrata</taxon>
        <taxon>Euteleostomi</taxon>
        <taxon>Mammalia</taxon>
        <taxon>Eutheria</taxon>
        <taxon>Euarchontoglires</taxon>
        <taxon>Primates</taxon>
        <taxon>Haplorrhini</taxon>
        <taxon>Catarrhini</taxon>
        <taxon>Hominidae</taxon>
        <taxon>Homo</taxon>
    </lineage>
</organism>
<keyword id="KW-0002">3D-structure</keyword>
<keyword id="KW-0025">Alternative splicing</keyword>
<keyword id="KW-0067">ATP-binding</keyword>
<keyword id="KW-0158">Chromosome</keyword>
<keyword id="KW-0903">Direct protein sequencing</keyword>
<keyword id="KW-0347">Helicase</keyword>
<keyword id="KW-0378">Hydrolase</keyword>
<keyword id="KW-1017">Isopeptide bond</keyword>
<keyword id="KW-0507">mRNA processing</keyword>
<keyword id="KW-0508">mRNA splicing</keyword>
<keyword id="KW-0547">Nucleotide-binding</keyword>
<keyword id="KW-0539">Nucleus</keyword>
<keyword id="KW-0597">Phosphoprotein</keyword>
<keyword id="KW-1267">Proteomics identification</keyword>
<keyword id="KW-1185">Reference proteome</keyword>
<keyword id="KW-0747">Spliceosome</keyword>
<keyword id="KW-0832">Ubl conjugation</keyword>
<sequence>MAGELADKKDRDASPSKEERKRSRTPDRERDRDRDRKSSPSKDRKRHRSRDRRRGGSRSRSRSRSKSAERERRHKERERDKERDRNKKDRDRDKDGHRRDKDRKRSSLSPGRGKDFKSRKDRDSKKDEEDEHGDKKPKAQPLSLEELLAKKKAEEEAEAKPKFLSKAEREAEALKRRQQEVEERQRMLEEERKKRKQFQDLGRKMLEDPQERERRERRERMERETNGNEDEEGRQKIREEKDKSKELHAIKERYLGGIKKRRRTRHLNDRKFVFEWDASEDTSIDYNPLYKERHQVQLLGRGFIAGIDLKQQKREQSRFYGDLMEKRRTLEEKEQEEARLRKLRKKEAKQRWDDRHWSQKKLDEMTDRDWRIFREDYSITTKGGKIPNPIRSWKDSSLPPHILEVIDKCGYKEPTPIQRQAIPIGLQNRDIIGVAETGSGKTAAFLIPLLVWITTLPKIDRIEESDQGPYAIILAPTRELAQQIEEETIKFGKPLGIRTVAVIGGISREDQGFRLRMGCEIVIATPGRLIDVLENRYLVLSRCTYVVLDEADRMIDMGFEPDVQKILEHMPVSNQKPDTDEAEDPEKMLANFESGKHKYRQTVMFTATMPPAVERLARSYLRRPAVVYIGSAGKPHERVEQKVFLMSESEKRKKLLAILEQGFDPPIIIFVNQKKGCDVLAKSLEKMGYNACTLHGGKGQEQREFALSNLKAGAKDILVATDVAGRGIDIQDVSMVVNYDMAKNIEDYIHRIGRTGRAGKSGVAITFLTKEDSAVFYELKQAILESPVSSCPPELANHPDAQHKPGTILTKKRREETIFA</sequence>
<protein>
    <recommendedName>
        <fullName evidence="13">Probable ATP-dependent RNA helicase DDX23</fullName>
        <ecNumber evidence="13">3.6.4.13</ecNumber>
    </recommendedName>
    <alternativeName>
        <fullName>100 kDa U5 snRNP-specific protein</fullName>
    </alternativeName>
    <alternativeName>
        <fullName>DEAD box protein 23</fullName>
    </alternativeName>
    <alternativeName>
        <fullName>PRP28 homolog</fullName>
    </alternativeName>
    <alternativeName>
        <fullName>U5-100kD</fullName>
    </alternativeName>
</protein>
<accession>Q9BUQ8</accession>
<accession>B2R600</accession>
<accession>B4DH15</accession>
<accession>O43188</accession>
<name>DDX23_HUMAN</name>
<proteinExistence type="evidence at protein level"/>